<protein>
    <recommendedName>
        <fullName>Gag-Pro-Pol polyprotein</fullName>
    </recommendedName>
    <alternativeName>
        <fullName>Pr160Gag-Pro-Pol</fullName>
    </alternativeName>
    <component>
        <recommendedName>
            <fullName>Matrix protein p19</fullName>
            <shortName>MA</shortName>
        </recommendedName>
    </component>
    <component>
        <recommendedName>
            <fullName>Capsid protein p24</fullName>
            <shortName>CA</shortName>
        </recommendedName>
    </component>
    <component>
        <recommendedName>
            <fullName>Nucleocapsid protein p15-pro</fullName>
            <shortName>NC'</shortName>
            <shortName>NC-pro</shortName>
        </recommendedName>
    </component>
    <component>
        <recommendedName>
            <fullName>Protease</fullName>
            <shortName>PR</shortName>
            <ecNumber evidence="7">3.4.23.-</ecNumber>
        </recommendedName>
    </component>
    <component>
        <recommendedName>
            <fullName>p1</fullName>
        </recommendedName>
    </component>
    <component>
        <recommendedName>
            <fullName>Reverse transcriptase/ribonuclease H, p49 subunit</fullName>
            <shortName>p49 RT</shortName>
            <ecNumber evidence="8">2.7.7.49</ecNumber>
            <ecNumber evidence="8">2.7.7.7</ecNumber>
            <ecNumber evidence="9">3.1.26.4</ecNumber>
        </recommendedName>
    </component>
    <component>
        <recommendedName>
            <fullName>Reverse transcriptase/ribonuclease H, p62 subunit</fullName>
            <shortName>p62 RT</shortName>
            <ecNumber evidence="8">2.7.7.49</ecNumber>
            <ecNumber evidence="8">2.7.7.7</ecNumber>
            <ecNumber evidence="9">3.1.26.4</ecNumber>
        </recommendedName>
    </component>
    <component>
        <recommendedName>
            <fullName>Integrase</fullName>
            <shortName>IN</shortName>
            <ecNumber evidence="4">2.7.7.-</ecNumber>
            <ecNumber evidence="4">3.1.-.-</ecNumber>
        </recommendedName>
    </component>
</protein>
<reference key="1">
    <citation type="journal article" date="1993" name="J. Virol.">
        <title>Complete nucleotide sequence of a highly divergent human T-cell leukemia (lymphotropic) virus type I (HTLV-I) variant from melanesia: genetic and phylogenetic relationship to HTLV-I strains from other geographical regions.</title>
        <authorList>
            <person name="Gessain A."/>
            <person name="Boeri E."/>
            <person name="Yanagihara R."/>
            <person name="Gallo R.C."/>
            <person name="Franchini G."/>
        </authorList>
    </citation>
    <scope>NUCLEOTIDE SEQUENCE [GENOMIC DNA]</scope>
</reference>
<accession>P0C211</accession>
<organismHost>
    <name type="scientific">Homo sapiens</name>
    <name type="common">Human</name>
    <dbReference type="NCBI Taxonomy" id="9606"/>
</organismHost>
<sequence length="1462" mass="162483">MGQIFPRSANPIPRPPRGLATHHWLNFLQAAYRLEPGPSSYDFHQLKTVLKMALETPVWMCPINYSLLASLLPKGYPGQVNEILQVLIQTQTQIPSHPAPPPPSSPTHDPPDSDPQIPPPYVEPTAPQVLPVMHPHGVPPTHRPWQMKDLQAIKQEVSQAAPGSPQFMQTIRLAVQQFDPTAKDLQDLLQYLCSSLVASLHHQQLDSLISEAETRGITGYNPLAGPLRVQANNPQQQGLRREYQQLWLTAFAALPGSAKDPSWASILQGLEEPYHTFVERLNVALDNGLPEGTPKDPILRSLAYSNANKECQKLLQARGHTNSPLGDMLRACQAWTPRDKTKVLVVQPKKPPPNQPCFRCGKAGHWSRDCAQPRPPPGPCPLCQDPTHWKRDCPRLKPAIPEPEPEEDALLLDLPADIPHPKNLHRGGGLTSPPTLRQVHPNKDPASILPVIPLDPARRPLIKAQVDTQTSHPRTIEALLDTGADMTVLPIALFSSDTPLKDTSVLGAGGQTQDHFKLTSLPVLIRLPFRTTPIVLTSCLVDTKNNWAIIGRDALQQCQGVLYLPEAKRPPVILPIQAPAVLGLEHLPRPPEISQFPLNPERLQALQHLVRKALEAGHIEPYTGPGNNPVFPVKKANGTWRFIHDLRATNSLTVDLSSSSPGPPDLSSLPTTLAHLQTIDLKDAFFQIPLPKQFQPYFAFTVPQQCNYGPGTRYAWKVLPQGFKNSPTLFEMQLASILQPIRQAFPQCVILQYMDDILLASPSPEDLQQLSEATMASLISHGLPVSQDKTQQTPGTIKFLGQIISPNHITYDAVPTVPIRSRWALPELQALLGEIQWVSKGTPTLRQPLHSLYCALQGHTDPRDQIYLNPSQVQSLMQLQQALSQNCRSRLAQTLPLLGAIMLTLTGTTTVVFQSKQQWPLVWLHAPLPHTSQCPWGQLLASAVLLLDKYTLQSYGLLCQTIHHNISIQTFNQFIQTSDHPSVPILLHHSHRFKNLGAQTGELWNTFLKTAAPLAPVKALTPVFTLSPIIINTAPCLFSDGSTSQAAYILWDKHILSQRSFPLPPPHKSAQQAELLGLLHGLSSARSWHCLNIFLDSKYLYHYLRTLALGTFQGKSSQAPFQALLPRLLAHKVIYLHHVRSHTNLPDPISKLNALTDALLITPILQLSPAELHSFTHCGQTALTLQGATTTEASNILRSCHACRKNNPQHQMPRGHIRRGLLPNHIWQGDITHFKYKNTLYRLHVWVDTFSGAISATQKRKETSSEAISSLLQAIAQLGKPSYINTDNGPAYISQDFLSMCTSLAIRHTTHVPYNPTSSGLVERSNGILKTLLYKYFTDRPDLPMDNALSIALWTINHLNVLTHCHKTRWQLHHSPRLQPIPETHSLISKQTHWYYFKLPGLNSRQWKGPQEALQEAAGAALIPVSANSAQWIPWRLLKQAACPRPAEGPADPKEKDHQHHG</sequence>
<feature type="initiator methionine" description="Removed; by host" evidence="5">
    <location>
        <position position="1"/>
    </location>
</feature>
<feature type="chain" id="PRO_0000259834" description="Gag-Pro-Pol polyprotein">
    <location>
        <begin position="2"/>
        <end position="1462"/>
    </location>
</feature>
<feature type="chain" id="PRO_0000259835" description="Matrix protein p19">
    <location>
        <begin position="2"/>
        <end position="130"/>
    </location>
</feature>
<feature type="chain" id="PRO_0000259836" description="Capsid protein p24">
    <location>
        <begin position="131"/>
        <end position="344"/>
    </location>
</feature>
<feature type="chain" id="PRO_0000259837" description="Nucleocapsid protein p15-pro">
    <location>
        <begin position="345"/>
        <end position="449"/>
    </location>
</feature>
<feature type="chain" id="PRO_0000259838" description="Protease">
    <location>
        <begin position="450"/>
        <end position="574"/>
    </location>
</feature>
<feature type="peptide" id="PRO_0000259839" description="p1">
    <location>
        <begin position="575"/>
        <end position="582"/>
    </location>
</feature>
<feature type="chain" id="PRO_0000259840" description="Reverse transcriptase/ribonuclease H, p62 subunit">
    <location>
        <begin position="583"/>
        <end position="1167"/>
    </location>
</feature>
<feature type="chain" id="PRO_0000442549" description="Reverse transcriptase/ribonuclease H, p49 subunit">
    <location>
        <begin position="583"/>
        <end position="1021"/>
    </location>
</feature>
<feature type="chain" id="PRO_0000259841" description="Integrase">
    <location>
        <begin position="1168"/>
        <end position="1462"/>
    </location>
</feature>
<feature type="domain" description="Peptidase A2" evidence="7">
    <location>
        <begin position="476"/>
        <end position="554"/>
    </location>
</feature>
<feature type="domain" description="Reverse transcriptase" evidence="8">
    <location>
        <begin position="614"/>
        <end position="804"/>
    </location>
</feature>
<feature type="domain" description="RNase H type-1" evidence="9">
    <location>
        <begin position="1031"/>
        <end position="1165"/>
    </location>
</feature>
<feature type="domain" description="Integrase catalytic" evidence="10">
    <location>
        <begin position="1219"/>
        <end position="1388"/>
    </location>
</feature>
<feature type="zinc finger region" description="CCHC-type 1" evidence="6">
    <location>
        <begin position="355"/>
        <end position="372"/>
    </location>
</feature>
<feature type="zinc finger region" description="CCHC-type 2" evidence="6">
    <location>
        <begin position="378"/>
        <end position="395"/>
    </location>
</feature>
<feature type="DNA-binding region" description="Integrase-type" evidence="11">
    <location>
        <begin position="1393"/>
        <end position="1443"/>
    </location>
</feature>
<feature type="region of interest" description="Disordered" evidence="13">
    <location>
        <begin position="93"/>
        <end position="143"/>
    </location>
</feature>
<feature type="short sequence motif" description="PPXY motif" evidence="2">
    <location>
        <begin position="118"/>
        <end position="121"/>
    </location>
</feature>
<feature type="short sequence motif" description="PTAP/PSAP motif" evidence="2">
    <location>
        <begin position="124"/>
        <end position="127"/>
    </location>
</feature>
<feature type="active site" description="For protease activity; shared with dimeric partner" evidence="12">
    <location>
        <position position="481"/>
    </location>
</feature>
<feature type="binding site" evidence="8">
    <location>
        <position position="680"/>
    </location>
    <ligand>
        <name>Mg(2+)</name>
        <dbReference type="ChEBI" id="CHEBI:18420"/>
        <label>1</label>
        <note>catalytic; for reverse transcriptase activity</note>
    </ligand>
</feature>
<feature type="binding site" evidence="8">
    <location>
        <position position="755"/>
    </location>
    <ligand>
        <name>Mg(2+)</name>
        <dbReference type="ChEBI" id="CHEBI:18420"/>
        <label>1</label>
        <note>catalytic; for reverse transcriptase activity</note>
    </ligand>
</feature>
<feature type="binding site" evidence="8">
    <location>
        <position position="756"/>
    </location>
    <ligand>
        <name>Mg(2+)</name>
        <dbReference type="ChEBI" id="CHEBI:18420"/>
        <label>1</label>
        <note>catalytic; for reverse transcriptase activity</note>
    </ligand>
</feature>
<feature type="binding site" evidence="9">
    <location>
        <position position="1040"/>
    </location>
    <ligand>
        <name>Mg(2+)</name>
        <dbReference type="ChEBI" id="CHEBI:18420"/>
        <label>2</label>
        <note>catalytic; for RNase H activity</note>
    </ligand>
</feature>
<feature type="binding site" evidence="9">
    <location>
        <position position="1074"/>
    </location>
    <ligand>
        <name>Mg(2+)</name>
        <dbReference type="ChEBI" id="CHEBI:18420"/>
        <label>2</label>
        <note>catalytic; for RNase H activity</note>
    </ligand>
</feature>
<feature type="binding site" evidence="9">
    <location>
        <position position="1096"/>
    </location>
    <ligand>
        <name>Mg(2+)</name>
        <dbReference type="ChEBI" id="CHEBI:18420"/>
        <label>2</label>
        <note>catalytic; for RNase H activity</note>
    </ligand>
</feature>
<feature type="binding site" evidence="9">
    <location>
        <position position="1157"/>
    </location>
    <ligand>
        <name>Mg(2+)</name>
        <dbReference type="ChEBI" id="CHEBI:18420"/>
        <label>2</label>
        <note>catalytic; for RNase H activity</note>
    </ligand>
</feature>
<feature type="binding site" evidence="10">
    <location>
        <position position="1230"/>
    </location>
    <ligand>
        <name>Mg(2+)</name>
        <dbReference type="ChEBI" id="CHEBI:18420"/>
        <label>3</label>
        <note>catalytic; for integrase activity</note>
    </ligand>
</feature>
<feature type="binding site" evidence="10">
    <location>
        <position position="1287"/>
    </location>
    <ligand>
        <name>Mg(2+)</name>
        <dbReference type="ChEBI" id="CHEBI:18420"/>
        <label>3</label>
        <note>catalytic; for integrase activity</note>
    </ligand>
</feature>
<feature type="site" description="Cleavage; by viral protease" evidence="3">
    <location>
        <begin position="130"/>
        <end position="131"/>
    </location>
</feature>
<feature type="site" description="Cleavage; by viral protease" evidence="3">
    <location>
        <begin position="344"/>
        <end position="345"/>
    </location>
</feature>
<feature type="site" description="Cleavage; by viral protease" evidence="3">
    <location>
        <begin position="449"/>
        <end position="450"/>
    </location>
</feature>
<feature type="site" description="Cleavage; by viral protease" evidence="3">
    <location>
        <begin position="574"/>
        <end position="575"/>
    </location>
</feature>
<feature type="site" description="Cleavage; by viral protease" evidence="3">
    <location>
        <begin position="582"/>
        <end position="583"/>
    </location>
</feature>
<feature type="site" description="Cleavage; by viral protease" evidence="3">
    <location>
        <begin position="1021"/>
        <end position="1022"/>
    </location>
</feature>
<feature type="site" description="Cleavage; by viral protease" evidence="3">
    <location>
        <begin position="1167"/>
        <end position="1168"/>
    </location>
</feature>
<feature type="modified residue" description="Phosphoserine; by host MAPK1" evidence="2">
    <location>
        <position position="105"/>
    </location>
</feature>
<feature type="lipid moiety-binding region" description="N-myristoyl glycine; by host" evidence="5">
    <location>
        <position position="2"/>
    </location>
</feature>
<feature type="helix" evidence="15">
    <location>
        <begin position="147"/>
        <end position="157"/>
    </location>
</feature>
<feature type="helix" evidence="15">
    <location>
        <begin position="165"/>
        <end position="178"/>
    </location>
</feature>
<feature type="helix" evidence="15">
    <location>
        <begin position="182"/>
        <end position="192"/>
    </location>
</feature>
<feature type="helix" evidence="15">
    <location>
        <begin position="195"/>
        <end position="215"/>
    </location>
</feature>
<feature type="helix" evidence="15">
    <location>
        <begin position="222"/>
        <end position="224"/>
    </location>
</feature>
<feature type="helix" evidence="15">
    <location>
        <begin position="227"/>
        <end position="230"/>
    </location>
</feature>
<feature type="helix" evidence="15">
    <location>
        <begin position="237"/>
        <end position="250"/>
    </location>
</feature>
<feature type="helix" evidence="15">
    <location>
        <begin position="251"/>
        <end position="253"/>
    </location>
</feature>
<feature type="helix" evidence="16">
    <location>
        <begin position="262"/>
        <end position="265"/>
    </location>
</feature>
<feature type="helix" evidence="16">
    <location>
        <begin position="274"/>
        <end position="288"/>
    </location>
</feature>
<feature type="helix" evidence="16">
    <location>
        <begin position="295"/>
        <end position="305"/>
    </location>
</feature>
<feature type="helix" evidence="16">
    <location>
        <begin position="309"/>
        <end position="316"/>
    </location>
</feature>
<feature type="helix" evidence="16">
    <location>
        <begin position="324"/>
        <end position="331"/>
    </location>
</feature>
<feature type="turn" evidence="16">
    <location>
        <begin position="332"/>
        <end position="334"/>
    </location>
</feature>
<organism>
    <name type="scientific">Human T-cell leukemia virus 1 (isolate Melanesia mel5 subtype C)</name>
    <name type="common">HTLV-1</name>
    <dbReference type="NCBI Taxonomy" id="402046"/>
    <lineage>
        <taxon>Viruses</taxon>
        <taxon>Riboviria</taxon>
        <taxon>Pararnavirae</taxon>
        <taxon>Artverviricota</taxon>
        <taxon>Revtraviricetes</taxon>
        <taxon>Ortervirales</taxon>
        <taxon>Retroviridae</taxon>
        <taxon>Orthoretrovirinae</taxon>
        <taxon>Deltaretrovirus</taxon>
        <taxon>Primate T-lymphotropic virus 1</taxon>
    </lineage>
</organism>
<gene>
    <name type="primary">gag-pro-pol</name>
</gene>
<proteinExistence type="evidence at protein level"/>
<keyword id="KW-0002">3D-structure</keyword>
<keyword id="KW-0064">Aspartyl protease</keyword>
<keyword id="KW-0167">Capsid protein</keyword>
<keyword id="KW-0229">DNA integration</keyword>
<keyword id="KW-0233">DNA recombination</keyword>
<keyword id="KW-0238">DNA-binding</keyword>
<keyword id="KW-0255">Endonuclease</keyword>
<keyword id="KW-1262">Eukaryotic host gene expression shutoff by virus</keyword>
<keyword id="KW-1193">Eukaryotic host translation shutoff by virus</keyword>
<keyword id="KW-1190">Host gene expression shutoff by virus</keyword>
<keyword id="KW-0945">Host-virus interaction</keyword>
<keyword id="KW-0378">Hydrolase</keyword>
<keyword id="KW-0449">Lipoprotein</keyword>
<keyword id="KW-0460">Magnesium</keyword>
<keyword id="KW-0479">Metal-binding</keyword>
<keyword id="KW-0511">Multifunctional enzyme</keyword>
<keyword id="KW-0519">Myristate</keyword>
<keyword id="KW-0540">Nuclease</keyword>
<keyword id="KW-0548">Nucleotidyltransferase</keyword>
<keyword id="KW-0597">Phosphoprotein</keyword>
<keyword id="KW-0645">Protease</keyword>
<keyword id="KW-0677">Repeat</keyword>
<keyword id="KW-0688">Ribosomal frameshifting</keyword>
<keyword id="KW-0695">RNA-directed DNA polymerase</keyword>
<keyword id="KW-0808">Transferase</keyword>
<keyword id="KW-1179">Viral genome integration</keyword>
<keyword id="KW-0543">Viral nucleoprotein</keyword>
<keyword id="KW-0946">Virion</keyword>
<keyword id="KW-1160">Virus entry into host cell</keyword>
<keyword id="KW-0862">Zinc</keyword>
<keyword id="KW-0863">Zinc-finger</keyword>
<name>POL_HTL1L</name>
<evidence type="ECO:0000250" key="1"/>
<evidence type="ECO:0000250" key="2">
    <source>
        <dbReference type="UniProtKB" id="P03345"/>
    </source>
</evidence>
<evidence type="ECO:0000250" key="3">
    <source>
        <dbReference type="UniProtKB" id="P03362"/>
    </source>
</evidence>
<evidence type="ECO:0000250" key="4">
    <source>
        <dbReference type="UniProtKB" id="P03363"/>
    </source>
</evidence>
<evidence type="ECO:0000255" key="5"/>
<evidence type="ECO:0000255" key="6">
    <source>
        <dbReference type="PROSITE-ProRule" id="PRU00047"/>
    </source>
</evidence>
<evidence type="ECO:0000255" key="7">
    <source>
        <dbReference type="PROSITE-ProRule" id="PRU00275"/>
    </source>
</evidence>
<evidence type="ECO:0000255" key="8">
    <source>
        <dbReference type="PROSITE-ProRule" id="PRU00405"/>
    </source>
</evidence>
<evidence type="ECO:0000255" key="9">
    <source>
        <dbReference type="PROSITE-ProRule" id="PRU00408"/>
    </source>
</evidence>
<evidence type="ECO:0000255" key="10">
    <source>
        <dbReference type="PROSITE-ProRule" id="PRU00457"/>
    </source>
</evidence>
<evidence type="ECO:0000255" key="11">
    <source>
        <dbReference type="PROSITE-ProRule" id="PRU00506"/>
    </source>
</evidence>
<evidence type="ECO:0000255" key="12">
    <source>
        <dbReference type="PROSITE-ProRule" id="PRU10094"/>
    </source>
</evidence>
<evidence type="ECO:0000256" key="13">
    <source>
        <dbReference type="SAM" id="MobiDB-lite"/>
    </source>
</evidence>
<evidence type="ECO:0000305" key="14"/>
<evidence type="ECO:0007829" key="15">
    <source>
        <dbReference type="PDB" id="8ERE"/>
    </source>
</evidence>
<evidence type="ECO:0007829" key="16">
    <source>
        <dbReference type="PDB" id="8ERH"/>
    </source>
</evidence>
<comment type="function">
    <molecule>Gag-Pro-Pol polyprotein</molecule>
    <text evidence="2">The matrix domain targets Gag, Gag-Pro and Gag-Pro-Pol polyproteins to the plasma membrane via a multipartite membrane binding signal, that includes its myristoylated N-terminus.</text>
</comment>
<comment type="function">
    <molecule>Matrix protein p19</molecule>
    <text evidence="2">Matrix protein.</text>
</comment>
<comment type="function">
    <molecule>Capsid protein p24</molecule>
    <text evidence="3">Forms the spherical core of the virus that encapsulates the genomic RNA-nucleocapsid complex.</text>
</comment>
<comment type="function">
    <molecule>Nucleocapsid protein p15-pro</molecule>
    <text evidence="2">Binds strongly to viral nucleic acids and promote their aggregation. Also destabilizes the nucleic acids duplexes via highly structured zinc-binding motifs.</text>
</comment>
<comment type="function">
    <molecule>Protease</molecule>
    <text evidence="3 7">The aspartyl protease mediates proteolytic cleavages of Gag and Gag-Pol polyproteins during or shortly after the release of the virion from the plasma membrane. Cleavages take place as an ordered, step-wise cascade to yield mature proteins. This process is called maturation. Displays maximal activity during the budding process just prior to particle release from the cell (Potential). Cleaves the translation initiation factor eIF4G leading to the inhibition of host cap-dependent translation (By similarity).</text>
</comment>
<comment type="function">
    <molecule>Reverse transcriptase/ribonuclease H, p49 subunit</molecule>
    <text evidence="1">RT is a multifunctional enzyme that converts the viral RNA genome into dsDNA in the cytoplasm, shortly after virus entry into the cell. This enzyme displays a DNA polymerase activity that can copy either DNA or RNA templates, and a ribonuclease H (RNase H) activity that cleaves the RNA strand of RNA-DNA heteroduplexes in a partially processive 3' to 5'-endonucleasic mode. Conversion of viral genomic RNA into dsDNA requires many steps. A tRNA-Pro binds to the primer-binding site (PBS) situated at the 5'-end of the viral RNA. RT uses the 3' end of the tRNA primer to perform a short round of RNA-dependent minus-strand DNA synthesis. The reading proceeds through the U5 region and ends after the repeated (R) region which is present at both ends of viral RNA. The portion of the RNA-DNA heteroduplex is digested by the RNase H, resulting in a ssDNA product attached to the tRNA primer. This ssDNA/tRNA hybridizes with the identical R region situated at the 3' end of viral RNA. This template exchange, known as minus-strand DNA strong stop transfer, can be either intra- or intermolecular. RT uses the 3' end of this newly synthesized short ssDNA to perform the RNA-dependent minus-strand DNA synthesis of the whole template. RNase H digests the RNA template except for a polypurine tract (PPT) situated at the 5' end of the genome. It is not clear if both polymerase and RNase H activities are simultaneous. RNase H probably can proceed both in a polymerase-dependent (RNA cut into small fragments by the same RT performing DNA synthesis) and a polymerase-independent mode (cleavage of remaining RNA fragments by free RTs). Secondly, RT performs DNA-directed plus-strand DNA synthesis using the PPT that has not been removed by RNase H as primer. PPT and tRNA primers are then removed by RNase H. The 3' and 5' ssDNA PBS regions hybridize to form a circular dsDNA intermediate. Strand displacement synthesis by RT to the PBS and PPT ends produces a blunt ended, linear dsDNA copy of the viral genome that includes long terminal repeats (LTRs) at both ends (By similarity).</text>
</comment>
<comment type="function">
    <molecule>Reverse transcriptase/ribonuclease H, p62 subunit</molecule>
    <text evidence="1">RT is a multifunctional enzyme that converts the viral RNA genome into dsDNA in the cytoplasm, shortly after virus entry into the cell. This enzyme displays a DNA polymerase activity that can copy either DNA or RNA templates, and a ribonuclease H (RNase H) activity that cleaves the RNA strand of RNA-DNA heteroduplexes in a partially processive 3' to 5'-endonucleasic mode. Conversion of viral genomic RNA into dsDNA requires many steps. A tRNA-Pro binds to the primer-binding site (PBS) situated at the 5'-end of the viral RNA. RT uses the 3' end of the tRNA primer to perform a short round of RNA-dependent minus-strand DNA synthesis. The reading proceeds through the U5 region and ends after the repeated (R) region which is present at both ends of viral RNA. The portion of the RNA-DNA heteroduplex is digested by the RNase H, resulting in a ssDNA product attached to the tRNA primer. This ssDNA/tRNA hybridizes with the identical R region situated at the 3' end of viral RNA. This template exchange, known as minus-strand DNA strong stop transfer, can be either intra- or intermolecular. RT uses the 3' end of this newly synthesized short ssDNA to perform the RNA-dependent minus-strand DNA synthesis of the whole template. RNase H digests the RNA template except for a polypurine tract (PPT) situated at the 5' end of the genome. It is not clear if both polymerase and RNase H activities are simultaneous. RNase H probably can proceed both in a polymerase-dependent (RNA cut into small fragments by the same RT performing DNA synthesis) and a polymerase-independent mode (cleavage of remaining RNA fragments by free RTs). Secondly, RT performs DNA-directed plus-strand DNA synthesis using the PPT that has not been removed by RNase H as primer. PPT and tRNA primers are then removed by RNase H. The 3' and 5' ssDNA PBS regions hybridize to form a circular dsDNA intermediate. Strand displacement synthesis by RT to the PBS and PPT ends produces a blunt ended, linear dsDNA copy of the viral genome that includes long terminal repeats (LTRs) at both ends (By similarity).</text>
</comment>
<comment type="function">
    <molecule>Integrase</molecule>
    <text evidence="3">Catalyzes viral DNA integration into the host chromosome, by performing a series of DNA cutting and joining reactions.</text>
</comment>
<comment type="catalytic activity">
    <reaction evidence="9">
        <text>Endonucleolytic cleavage to 5'-phosphomonoester.</text>
        <dbReference type="EC" id="3.1.26.4"/>
    </reaction>
</comment>
<comment type="catalytic activity">
    <reaction evidence="8">
        <text>DNA(n) + a 2'-deoxyribonucleoside 5'-triphosphate = DNA(n+1) + diphosphate</text>
        <dbReference type="Rhea" id="RHEA:22508"/>
        <dbReference type="Rhea" id="RHEA-COMP:17339"/>
        <dbReference type="Rhea" id="RHEA-COMP:17340"/>
        <dbReference type="ChEBI" id="CHEBI:33019"/>
        <dbReference type="ChEBI" id="CHEBI:61560"/>
        <dbReference type="ChEBI" id="CHEBI:173112"/>
        <dbReference type="EC" id="2.7.7.49"/>
    </reaction>
</comment>
<comment type="catalytic activity">
    <reaction evidence="8">
        <text>DNA(n) + a 2'-deoxyribonucleoside 5'-triphosphate = DNA(n+1) + diphosphate</text>
        <dbReference type="Rhea" id="RHEA:22508"/>
        <dbReference type="Rhea" id="RHEA-COMP:17339"/>
        <dbReference type="Rhea" id="RHEA-COMP:17340"/>
        <dbReference type="ChEBI" id="CHEBI:33019"/>
        <dbReference type="ChEBI" id="CHEBI:61560"/>
        <dbReference type="ChEBI" id="CHEBI:173112"/>
        <dbReference type="EC" id="2.7.7.7"/>
    </reaction>
</comment>
<comment type="cofactor">
    <cofactor evidence="8">
        <name>Mg(2+)</name>
        <dbReference type="ChEBI" id="CHEBI:18420"/>
    </cofactor>
    <text evidence="8">The RT polymerase active site binds 2 magnesium ions.</text>
</comment>
<comment type="cofactor">
    <cofactor evidence="1">
        <name>Mg(2+)</name>
        <dbReference type="ChEBI" id="CHEBI:18420"/>
    </cofactor>
    <text evidence="1">Binds 2 magnesium ions for ribonuclease H (RNase H) activity.</text>
</comment>
<comment type="subunit">
    <molecule>Gag-Pro-Pol polyprotein</molecule>
    <text evidence="2">Homodimer; the homodimers are part of the immature particles. Interacts with human TSG101 and NEDD4; these interactions are essential for budding and release of viral particles.</text>
</comment>
<comment type="subunit">
    <molecule>Matrix protein p19</molecule>
    <text evidence="2">Homodimer; further assembles as homohexamers.</text>
</comment>
<comment type="subcellular location">
    <molecule>Matrix protein p19</molecule>
    <subcellularLocation>
        <location evidence="2">Virion</location>
    </subcellularLocation>
</comment>
<comment type="subcellular location">
    <molecule>Capsid protein p24</molecule>
    <subcellularLocation>
        <location evidence="2">Virion</location>
    </subcellularLocation>
</comment>
<comment type="subcellular location">
    <molecule>Nucleocapsid protein p15-pro</molecule>
    <subcellularLocation>
        <location evidence="2">Virion</location>
    </subcellularLocation>
</comment>
<comment type="alternative products">
    <event type="ribosomal frameshifting"/>
    <isoform>
        <id>P0C211-1</id>
        <name>Gag-Pol polyprotein</name>
        <sequence type="displayed"/>
    </isoform>
    <isoform>
        <id>P0C210-1</id>
        <name>Gag-Pro polyprotein</name>
        <sequence type="external"/>
    </isoform>
    <isoform>
        <id>P0C209-1</id>
        <name>Gag polyprotein</name>
        <sequence type="external"/>
    </isoform>
    <text evidence="14">This strategy of translation probably allows the virus to modulate the quantity of each viral protein.</text>
</comment>
<comment type="domain">
    <text evidence="2">Gag polyprotein: Late-budding domains (L domains) are short sequence motifs essential for viral particle release. They can occur individually or in close proximity within structural proteins. They interacts with sorting cellular proteins of the multivesicular body (MVB) pathway. Most of these proteins are class E vacuolar protein sorting factors belonging to ESCRT-I, ESCRT-II or ESCRT-III complexes. Matrix protein p19 contains two L domains: a PTAP/PSAP motif which interacts with the UEV domain of TSG101, and a PPXY motif which binds to the WW domains of the ubiquitin ligase NEDD4.</text>
</comment>
<comment type="domain">
    <molecule>Capsid protein p24</molecule>
    <text evidence="3">The capsid protein N-terminus seems to be involved in Gag-Gag interactions.</text>
</comment>
<comment type="PTM">
    <molecule>Matrix protein p19</molecule>
    <text evidence="2">Phosphorylation of the matrix protein p19 by MAPK1 seems to play a role in budding.</text>
</comment>
<comment type="PTM">
    <molecule>Gag-Pro-Pol polyprotein</molecule>
    <text evidence="2">Myristoylated. Myristoylation of the matrix (MA) domain mediates the transport and binding of Gag polyproteins to the host plasma membrane and is required for the assembly of viral particles.</text>
</comment>
<comment type="PTM">
    <molecule>Gag-Pro-Pol polyprotein</molecule>
    <text evidence="3">Specific enzymatic cleavages by the viral protease yield mature proteins. The polyprotein is cleaved during and after budding, this process is termed maturation. The protease is autoproteolytically processed at its N- and C-termini.</text>
</comment>
<comment type="miscellaneous">
    <text evidence="8">The reverse transcriptase is an error-prone enzyme that lacks a proof-reading function. High mutations rate is a direct consequence of this characteristic. RT also displays frequent template switching leading to high recombination rate. Recombination mostly occurs between homologous regions of the two copackaged RNA genomes. If these two RNA molecules derive from different viral strains, reverse transcription will give rise to highly recombinated proviral DNAs.</text>
</comment>
<comment type="miscellaneous">
    <text>HTLV-1 lineages are divided in four clades, A (Cosmopolitan), B (Central African group), C (Melanesian group) and D (New Central African group).</text>
</comment>
<comment type="miscellaneous">
    <molecule>Isoform Gag-Pol polyprotein</molecule>
    <text>Produced by -1 ribosomal frameshifting at the gag-pol genes boundary.</text>
</comment>
<dbReference type="EC" id="3.4.23.-" evidence="7"/>
<dbReference type="EC" id="2.7.7.49" evidence="8"/>
<dbReference type="EC" id="2.7.7.7" evidence="8"/>
<dbReference type="EC" id="3.1.26.4" evidence="9"/>
<dbReference type="EC" id="2.7.7.-" evidence="4"/>
<dbReference type="EC" id="3.1.-.-" evidence="4"/>
<dbReference type="EMBL" id="L02534">
    <property type="status" value="NOT_ANNOTATED_CDS"/>
    <property type="molecule type" value="Genomic_DNA"/>
</dbReference>
<dbReference type="PDB" id="8ERE">
    <property type="method" value="X-ray"/>
    <property type="resolution" value="0.87 A"/>
    <property type="chains" value="A=131-257"/>
</dbReference>
<dbReference type="PDB" id="8ERF">
    <property type="method" value="X-ray"/>
    <property type="resolution" value="1.47 A"/>
    <property type="chains" value="A/B=131-257"/>
</dbReference>
<dbReference type="PDB" id="8ERG">
    <property type="method" value="X-ray"/>
    <property type="resolution" value="2.10 A"/>
    <property type="chains" value="A=131-257"/>
</dbReference>
<dbReference type="PDB" id="8ERH">
    <property type="method" value="X-ray"/>
    <property type="resolution" value="1.47 A"/>
    <property type="chains" value="A/B/C/D/E/F=258-344"/>
</dbReference>
<dbReference type="PDB" id="8ERI">
    <property type="method" value="X-ray"/>
    <property type="resolution" value="2.25 A"/>
    <property type="chains" value="A/B/C=131-344"/>
</dbReference>
<dbReference type="PDBsum" id="8ERE"/>
<dbReference type="PDBsum" id="8ERF"/>
<dbReference type="PDBsum" id="8ERG"/>
<dbReference type="PDBsum" id="8ERH"/>
<dbReference type="PDBsum" id="8ERI"/>
<dbReference type="BMRB" id="P0C211"/>
<dbReference type="SMR" id="P0C211"/>
<dbReference type="GO" id="GO:0019013">
    <property type="term" value="C:viral nucleocapsid"/>
    <property type="evidence" value="ECO:0007669"/>
    <property type="project" value="UniProtKB-KW"/>
</dbReference>
<dbReference type="GO" id="GO:0004190">
    <property type="term" value="F:aspartic-type endopeptidase activity"/>
    <property type="evidence" value="ECO:0007669"/>
    <property type="project" value="UniProtKB-KW"/>
</dbReference>
<dbReference type="GO" id="GO:0003677">
    <property type="term" value="F:DNA binding"/>
    <property type="evidence" value="ECO:0007669"/>
    <property type="project" value="UniProtKB-KW"/>
</dbReference>
<dbReference type="GO" id="GO:0003887">
    <property type="term" value="F:DNA-directed DNA polymerase activity"/>
    <property type="evidence" value="ECO:0007669"/>
    <property type="project" value="UniProtKB-EC"/>
</dbReference>
<dbReference type="GO" id="GO:0035613">
    <property type="term" value="F:RNA stem-loop binding"/>
    <property type="evidence" value="ECO:0007669"/>
    <property type="project" value="TreeGrafter"/>
</dbReference>
<dbReference type="GO" id="GO:0003964">
    <property type="term" value="F:RNA-directed DNA polymerase activity"/>
    <property type="evidence" value="ECO:0007669"/>
    <property type="project" value="UniProtKB-KW"/>
</dbReference>
<dbReference type="GO" id="GO:0004523">
    <property type="term" value="F:RNA-DNA hybrid ribonuclease activity"/>
    <property type="evidence" value="ECO:0007669"/>
    <property type="project" value="UniProtKB-EC"/>
</dbReference>
<dbReference type="GO" id="GO:0005198">
    <property type="term" value="F:structural molecule activity"/>
    <property type="evidence" value="ECO:0007669"/>
    <property type="project" value="InterPro"/>
</dbReference>
<dbReference type="GO" id="GO:0008270">
    <property type="term" value="F:zinc ion binding"/>
    <property type="evidence" value="ECO:0007669"/>
    <property type="project" value="UniProtKB-KW"/>
</dbReference>
<dbReference type="GO" id="GO:0015074">
    <property type="term" value="P:DNA integration"/>
    <property type="evidence" value="ECO:0007669"/>
    <property type="project" value="UniProtKB-KW"/>
</dbReference>
<dbReference type="GO" id="GO:0006310">
    <property type="term" value="P:DNA recombination"/>
    <property type="evidence" value="ECO:0007669"/>
    <property type="project" value="UniProtKB-KW"/>
</dbReference>
<dbReference type="GO" id="GO:0075713">
    <property type="term" value="P:establishment of integrated proviral latency"/>
    <property type="evidence" value="ECO:0007669"/>
    <property type="project" value="UniProtKB-KW"/>
</dbReference>
<dbReference type="GO" id="GO:0006508">
    <property type="term" value="P:proteolysis"/>
    <property type="evidence" value="ECO:0007669"/>
    <property type="project" value="UniProtKB-KW"/>
</dbReference>
<dbReference type="GO" id="GO:0046718">
    <property type="term" value="P:symbiont entry into host cell"/>
    <property type="evidence" value="ECO:0007669"/>
    <property type="project" value="UniProtKB-KW"/>
</dbReference>
<dbReference type="GO" id="GO:0039657">
    <property type="term" value="P:symbiont-mediated suppression of host gene expression"/>
    <property type="evidence" value="ECO:0007669"/>
    <property type="project" value="UniProtKB-KW"/>
</dbReference>
<dbReference type="GO" id="GO:0044826">
    <property type="term" value="P:viral genome integration into host DNA"/>
    <property type="evidence" value="ECO:0007669"/>
    <property type="project" value="UniProtKB-KW"/>
</dbReference>
<dbReference type="GO" id="GO:0075523">
    <property type="term" value="P:viral translational frameshifting"/>
    <property type="evidence" value="ECO:0007669"/>
    <property type="project" value="UniProtKB-KW"/>
</dbReference>
<dbReference type="Gene3D" id="1.10.1200.30">
    <property type="match status" value="1"/>
</dbReference>
<dbReference type="Gene3D" id="3.30.70.270">
    <property type="match status" value="2"/>
</dbReference>
<dbReference type="Gene3D" id="2.40.70.10">
    <property type="entry name" value="Acid Proteases"/>
    <property type="match status" value="1"/>
</dbReference>
<dbReference type="Gene3D" id="1.10.185.10">
    <property type="entry name" value="Delta-retroviral matrix"/>
    <property type="match status" value="1"/>
</dbReference>
<dbReference type="Gene3D" id="3.10.10.10">
    <property type="entry name" value="HIV Type 1 Reverse Transcriptase, subunit A, domain 1"/>
    <property type="match status" value="1"/>
</dbReference>
<dbReference type="Gene3D" id="1.10.375.10">
    <property type="entry name" value="Human Immunodeficiency Virus Type 1 Capsid Protein"/>
    <property type="match status" value="1"/>
</dbReference>
<dbReference type="Gene3D" id="3.30.420.10">
    <property type="entry name" value="Ribonuclease H-like superfamily/Ribonuclease H"/>
    <property type="match status" value="2"/>
</dbReference>
<dbReference type="Gene3D" id="4.10.60.10">
    <property type="entry name" value="Zinc finger, CCHC-type"/>
    <property type="match status" value="1"/>
</dbReference>
<dbReference type="InterPro" id="IPR001969">
    <property type="entry name" value="Aspartic_peptidase_AS"/>
</dbReference>
<dbReference type="InterPro" id="IPR003139">
    <property type="entry name" value="D_retro_matrix"/>
</dbReference>
<dbReference type="InterPro" id="IPR043502">
    <property type="entry name" value="DNA/RNA_pol_sf"/>
</dbReference>
<dbReference type="InterPro" id="IPR045345">
    <property type="entry name" value="Gag_p24_C"/>
</dbReference>
<dbReference type="InterPro" id="IPR036862">
    <property type="entry name" value="Integrase_C_dom_sf_retrovir"/>
</dbReference>
<dbReference type="InterPro" id="IPR001037">
    <property type="entry name" value="Integrase_C_retrovir"/>
</dbReference>
<dbReference type="InterPro" id="IPR001584">
    <property type="entry name" value="Integrase_cat-core"/>
</dbReference>
<dbReference type="InterPro" id="IPR003308">
    <property type="entry name" value="Integrase_Zn-bd_dom_N"/>
</dbReference>
<dbReference type="InterPro" id="IPR001995">
    <property type="entry name" value="Peptidase_A2_cat"/>
</dbReference>
<dbReference type="InterPro" id="IPR021109">
    <property type="entry name" value="Peptidase_aspartic_dom_sf"/>
</dbReference>
<dbReference type="InterPro" id="IPR018061">
    <property type="entry name" value="Retropepsins"/>
</dbReference>
<dbReference type="InterPro" id="IPR008916">
    <property type="entry name" value="Retrov_capsid_C"/>
</dbReference>
<dbReference type="InterPro" id="IPR008919">
    <property type="entry name" value="Retrov_capsid_N"/>
</dbReference>
<dbReference type="InterPro" id="IPR010999">
    <property type="entry name" value="Retrovr_matrix"/>
</dbReference>
<dbReference type="InterPro" id="IPR043128">
    <property type="entry name" value="Rev_trsase/Diguanyl_cyclase"/>
</dbReference>
<dbReference type="InterPro" id="IPR012337">
    <property type="entry name" value="RNaseH-like_sf"/>
</dbReference>
<dbReference type="InterPro" id="IPR002156">
    <property type="entry name" value="RNaseH_domain"/>
</dbReference>
<dbReference type="InterPro" id="IPR036397">
    <property type="entry name" value="RNaseH_sf"/>
</dbReference>
<dbReference type="InterPro" id="IPR000477">
    <property type="entry name" value="RT_dom"/>
</dbReference>
<dbReference type="InterPro" id="IPR001878">
    <property type="entry name" value="Znf_CCHC"/>
</dbReference>
<dbReference type="InterPro" id="IPR036875">
    <property type="entry name" value="Znf_CCHC_sf"/>
</dbReference>
<dbReference type="PANTHER" id="PTHR41694">
    <property type="entry name" value="ENDOGENOUS RETROVIRUS GROUP K MEMBER POL PROTEIN"/>
    <property type="match status" value="1"/>
</dbReference>
<dbReference type="PANTHER" id="PTHR41694:SF3">
    <property type="entry name" value="RNA-DIRECTED DNA POLYMERASE-RELATED"/>
    <property type="match status" value="1"/>
</dbReference>
<dbReference type="Pfam" id="PF02228">
    <property type="entry name" value="Gag_p19"/>
    <property type="match status" value="1"/>
</dbReference>
<dbReference type="Pfam" id="PF00607">
    <property type="entry name" value="Gag_p24"/>
    <property type="match status" value="1"/>
</dbReference>
<dbReference type="Pfam" id="PF19317">
    <property type="entry name" value="Gag_p24_C"/>
    <property type="match status" value="1"/>
</dbReference>
<dbReference type="Pfam" id="PF00552">
    <property type="entry name" value="IN_DBD_C"/>
    <property type="match status" value="1"/>
</dbReference>
<dbReference type="Pfam" id="PF02022">
    <property type="entry name" value="Integrase_Zn"/>
    <property type="match status" value="1"/>
</dbReference>
<dbReference type="Pfam" id="PF00075">
    <property type="entry name" value="RNase_H"/>
    <property type="match status" value="1"/>
</dbReference>
<dbReference type="Pfam" id="PF00665">
    <property type="entry name" value="rve"/>
    <property type="match status" value="1"/>
</dbReference>
<dbReference type="Pfam" id="PF00077">
    <property type="entry name" value="RVP"/>
    <property type="match status" value="1"/>
</dbReference>
<dbReference type="Pfam" id="PF00078">
    <property type="entry name" value="RVT_1"/>
    <property type="match status" value="1"/>
</dbReference>
<dbReference type="Pfam" id="PF00098">
    <property type="entry name" value="zf-CCHC"/>
    <property type="match status" value="1"/>
</dbReference>
<dbReference type="SMART" id="SM00343">
    <property type="entry name" value="ZnF_C2HC"/>
    <property type="match status" value="2"/>
</dbReference>
<dbReference type="SUPFAM" id="SSF50630">
    <property type="entry name" value="Acid proteases"/>
    <property type="match status" value="1"/>
</dbReference>
<dbReference type="SUPFAM" id="SSF50122">
    <property type="entry name" value="DNA-binding domain of retroviral integrase"/>
    <property type="match status" value="1"/>
</dbReference>
<dbReference type="SUPFAM" id="SSF56672">
    <property type="entry name" value="DNA/RNA polymerases"/>
    <property type="match status" value="1"/>
</dbReference>
<dbReference type="SUPFAM" id="SSF47836">
    <property type="entry name" value="Retroviral matrix proteins"/>
    <property type="match status" value="1"/>
</dbReference>
<dbReference type="SUPFAM" id="SSF47353">
    <property type="entry name" value="Retrovirus capsid dimerization domain-like"/>
    <property type="match status" value="1"/>
</dbReference>
<dbReference type="SUPFAM" id="SSF47943">
    <property type="entry name" value="Retrovirus capsid protein, N-terminal core domain"/>
    <property type="match status" value="1"/>
</dbReference>
<dbReference type="SUPFAM" id="SSF57756">
    <property type="entry name" value="Retrovirus zinc finger-like domains"/>
    <property type="match status" value="1"/>
</dbReference>
<dbReference type="SUPFAM" id="SSF53098">
    <property type="entry name" value="Ribonuclease H-like"/>
    <property type="match status" value="1"/>
</dbReference>
<dbReference type="PROSITE" id="PS50175">
    <property type="entry name" value="ASP_PROT_RETROV"/>
    <property type="match status" value="1"/>
</dbReference>
<dbReference type="PROSITE" id="PS00141">
    <property type="entry name" value="ASP_PROTEASE"/>
    <property type="match status" value="1"/>
</dbReference>
<dbReference type="PROSITE" id="PS50994">
    <property type="entry name" value="INTEGRASE"/>
    <property type="match status" value="1"/>
</dbReference>
<dbReference type="PROSITE" id="PS51027">
    <property type="entry name" value="INTEGRASE_DBD"/>
    <property type="match status" value="1"/>
</dbReference>
<dbReference type="PROSITE" id="PS50879">
    <property type="entry name" value="RNASE_H_1"/>
    <property type="match status" value="1"/>
</dbReference>
<dbReference type="PROSITE" id="PS50878">
    <property type="entry name" value="RT_POL"/>
    <property type="match status" value="1"/>
</dbReference>
<dbReference type="PROSITE" id="PS50158">
    <property type="entry name" value="ZF_CCHC"/>
    <property type="match status" value="1"/>
</dbReference>